<accession>P9WKP3</accession>
<accession>L0T6S3</accession>
<accession>P64759</accession>
<accession>Q10562</accession>
<proteinExistence type="evidence at protein level"/>
<protein>
    <recommendedName>
        <fullName>Uncharacterized protein Rv0906</fullName>
    </recommendedName>
</protein>
<evidence type="ECO:0000255" key="1"/>
<evidence type="ECO:0000305" key="2"/>
<dbReference type="EMBL" id="AL123456">
    <property type="protein sequence ID" value="CCP43654.1"/>
    <property type="molecule type" value="Genomic_DNA"/>
</dbReference>
<dbReference type="PIR" id="G70783">
    <property type="entry name" value="G70783"/>
</dbReference>
<dbReference type="RefSeq" id="NP_215421.1">
    <property type="nucleotide sequence ID" value="NC_000962.3"/>
</dbReference>
<dbReference type="RefSeq" id="WP_003404705.1">
    <property type="nucleotide sequence ID" value="NZ_NVQJ01000001.1"/>
</dbReference>
<dbReference type="SMR" id="P9WKP3"/>
<dbReference type="FunCoup" id="P9WKP3">
    <property type="interactions" value="178"/>
</dbReference>
<dbReference type="STRING" id="83332.Rv0906"/>
<dbReference type="PaxDb" id="83332-Rv0906"/>
<dbReference type="DNASU" id="885150"/>
<dbReference type="GeneID" id="885150"/>
<dbReference type="KEGG" id="mtu:Rv0906"/>
<dbReference type="KEGG" id="mtv:RVBD_0906"/>
<dbReference type="PATRIC" id="fig|83332.111.peg.1002"/>
<dbReference type="TubercuList" id="Rv0906"/>
<dbReference type="eggNOG" id="COG2220">
    <property type="taxonomic scope" value="Bacteria"/>
</dbReference>
<dbReference type="InParanoid" id="P9WKP3"/>
<dbReference type="OrthoDB" id="9805728at2"/>
<dbReference type="PhylomeDB" id="P9WKP3"/>
<dbReference type="Proteomes" id="UP000001584">
    <property type="component" value="Chromosome"/>
</dbReference>
<dbReference type="GO" id="GO:0005737">
    <property type="term" value="C:cytoplasm"/>
    <property type="evidence" value="ECO:0000318"/>
    <property type="project" value="GO_Central"/>
</dbReference>
<dbReference type="GO" id="GO:0070290">
    <property type="term" value="F:N-acylphosphatidylethanolamine-specific phospholipase D activity"/>
    <property type="evidence" value="ECO:0007669"/>
    <property type="project" value="InterPro"/>
</dbReference>
<dbReference type="GO" id="GO:0008270">
    <property type="term" value="F:zinc ion binding"/>
    <property type="evidence" value="ECO:0007669"/>
    <property type="project" value="InterPro"/>
</dbReference>
<dbReference type="Gene3D" id="3.60.15.10">
    <property type="entry name" value="Ribonuclease Z/Hydroxyacylglutathione hydrolase-like"/>
    <property type="match status" value="1"/>
</dbReference>
<dbReference type="InterPro" id="IPR001279">
    <property type="entry name" value="Metallo-B-lactamas"/>
</dbReference>
<dbReference type="InterPro" id="IPR024884">
    <property type="entry name" value="NAPE-PLD"/>
</dbReference>
<dbReference type="InterPro" id="IPR036866">
    <property type="entry name" value="RibonucZ/Hydroxyglut_hydro"/>
</dbReference>
<dbReference type="PANTHER" id="PTHR15032">
    <property type="entry name" value="N-ACYL-PHOSPHATIDYLETHANOLAMINE-HYDROLYZING PHOSPHOLIPASE D"/>
    <property type="match status" value="1"/>
</dbReference>
<dbReference type="PANTHER" id="PTHR15032:SF4">
    <property type="entry name" value="N-ACYL-PHOSPHATIDYLETHANOLAMINE-HYDROLYZING PHOSPHOLIPASE D"/>
    <property type="match status" value="1"/>
</dbReference>
<dbReference type="Pfam" id="PF12706">
    <property type="entry name" value="Lactamase_B_2"/>
    <property type="match status" value="1"/>
</dbReference>
<dbReference type="PIRSF" id="PIRSF038896">
    <property type="entry name" value="NAPE-PLD"/>
    <property type="match status" value="1"/>
</dbReference>
<dbReference type="SUPFAM" id="SSF56281">
    <property type="entry name" value="Metallo-hydrolase/oxidoreductase"/>
    <property type="match status" value="1"/>
</dbReference>
<gene>
    <name type="ordered locus">Rv0906</name>
    <name type="ORF">MTCY31.34</name>
</gene>
<comment type="similarity">
    <text evidence="2">To K.pneumoniae RomA.</text>
</comment>
<organism>
    <name type="scientific">Mycobacterium tuberculosis (strain ATCC 25618 / H37Rv)</name>
    <dbReference type="NCBI Taxonomy" id="83332"/>
    <lineage>
        <taxon>Bacteria</taxon>
        <taxon>Bacillati</taxon>
        <taxon>Actinomycetota</taxon>
        <taxon>Actinomycetes</taxon>
        <taxon>Mycobacteriales</taxon>
        <taxon>Mycobacteriaceae</taxon>
        <taxon>Mycobacterium</taxon>
        <taxon>Mycobacterium tuberculosis complex</taxon>
    </lineage>
</organism>
<reference key="1">
    <citation type="journal article" date="1998" name="Nature">
        <title>Deciphering the biology of Mycobacterium tuberculosis from the complete genome sequence.</title>
        <authorList>
            <person name="Cole S.T."/>
            <person name="Brosch R."/>
            <person name="Parkhill J."/>
            <person name="Garnier T."/>
            <person name="Churcher C.M."/>
            <person name="Harris D.E."/>
            <person name="Gordon S.V."/>
            <person name="Eiglmeier K."/>
            <person name="Gas S."/>
            <person name="Barry C.E. III"/>
            <person name="Tekaia F."/>
            <person name="Badcock K."/>
            <person name="Basham D."/>
            <person name="Brown D."/>
            <person name="Chillingworth T."/>
            <person name="Connor R."/>
            <person name="Davies R.M."/>
            <person name="Devlin K."/>
            <person name="Feltwell T."/>
            <person name="Gentles S."/>
            <person name="Hamlin N."/>
            <person name="Holroyd S."/>
            <person name="Hornsby T."/>
            <person name="Jagels K."/>
            <person name="Krogh A."/>
            <person name="McLean J."/>
            <person name="Moule S."/>
            <person name="Murphy L.D."/>
            <person name="Oliver S."/>
            <person name="Osborne J."/>
            <person name="Quail M.A."/>
            <person name="Rajandream M.A."/>
            <person name="Rogers J."/>
            <person name="Rutter S."/>
            <person name="Seeger K."/>
            <person name="Skelton S."/>
            <person name="Squares S."/>
            <person name="Squares R."/>
            <person name="Sulston J.E."/>
            <person name="Taylor K."/>
            <person name="Whitehead S."/>
            <person name="Barrell B.G."/>
        </authorList>
    </citation>
    <scope>NUCLEOTIDE SEQUENCE [LARGE SCALE GENOMIC DNA]</scope>
    <source>
        <strain>ATCC 25618 / H37Rv</strain>
    </source>
</reference>
<reference key="2">
    <citation type="journal article" date="2011" name="Mol. Cell. Proteomics">
        <title>Proteogenomic analysis of Mycobacterium tuberculosis by high resolution mass spectrometry.</title>
        <authorList>
            <person name="Kelkar D.S."/>
            <person name="Kumar D."/>
            <person name="Kumar P."/>
            <person name="Balakrishnan L."/>
            <person name="Muthusamy B."/>
            <person name="Yadav A.K."/>
            <person name="Shrivastava P."/>
            <person name="Marimuthu A."/>
            <person name="Anand S."/>
            <person name="Sundaram H."/>
            <person name="Kingsbury R."/>
            <person name="Harsha H.C."/>
            <person name="Nair B."/>
            <person name="Prasad T.S."/>
            <person name="Chauhan D.S."/>
            <person name="Katoch K."/>
            <person name="Katoch V.M."/>
            <person name="Kumar P."/>
            <person name="Chaerkady R."/>
            <person name="Ramachandran S."/>
            <person name="Dash D."/>
            <person name="Pandey A."/>
        </authorList>
    </citation>
    <scope>IDENTIFICATION BY MASS SPECTROMETRY [LARGE SCALE ANALYSIS]</scope>
    <source>
        <strain>ATCC 25618 / H37Rv</strain>
    </source>
</reference>
<keyword id="KW-1185">Reference proteome</keyword>
<keyword id="KW-0732">Signal</keyword>
<feature type="signal peptide" evidence="1">
    <location>
        <begin position="1"/>
        <end position="33"/>
    </location>
</feature>
<feature type="chain" id="PRO_0000014085" description="Uncharacterized protein Rv0906">
    <location>
        <begin position="34"/>
        <end position="372"/>
    </location>
</feature>
<sequence>MVRRALRLAAGTASLAAGTWLLRALHGTPAALGADAASIRAVSEQSPNYRDGAFVNLDPASMFTLDREELRLIVWELVARHSASRPAAPIPLASPNIYRGDASRLAVSWFGHSTALLEIDGYRVLTDPVWSDRCSPSDVVGPQRLHPPPVQLAALPAVDAVVISHDHYDHLDIDTVVALVGMQRAPFLVPLGVGAHLRSWGVPQDRIVELDWNQSAQVDELTVVCVPARHFSGRFLSRNTTLWASWAFVGPNHRAYFGGDTGYTKSFTQIGADHGPFDLTLLPIGAYNTAWPDIHMNPEEAVRAHLDVTDSGSGMLVPVHWGTFRLAPHPWGEPVERLLAAAEPEHVTVAVPLPGQRVDPTGPMRLHPWWRL</sequence>
<name>Y906_MYCTU</name>